<name>COBT_GEOUR</name>
<evidence type="ECO:0000255" key="1">
    <source>
        <dbReference type="HAMAP-Rule" id="MF_00230"/>
    </source>
</evidence>
<dbReference type="EC" id="2.4.2.21" evidence="1"/>
<dbReference type="EMBL" id="CP000698">
    <property type="protein sequence ID" value="ABQ28330.1"/>
    <property type="molecule type" value="Genomic_DNA"/>
</dbReference>
<dbReference type="RefSeq" id="WP_011940961.1">
    <property type="nucleotide sequence ID" value="NC_009483.1"/>
</dbReference>
<dbReference type="SMR" id="A5G962"/>
<dbReference type="STRING" id="351605.Gura_4187"/>
<dbReference type="KEGG" id="gur:Gura_4187"/>
<dbReference type="HOGENOM" id="CLU_002982_0_0_7"/>
<dbReference type="OrthoDB" id="9781491at2"/>
<dbReference type="UniPathway" id="UPA00061">
    <property type="reaction ID" value="UER00516"/>
</dbReference>
<dbReference type="Proteomes" id="UP000006695">
    <property type="component" value="Chromosome"/>
</dbReference>
<dbReference type="GO" id="GO:0008939">
    <property type="term" value="F:nicotinate-nucleotide-dimethylbenzimidazole phosphoribosyltransferase activity"/>
    <property type="evidence" value="ECO:0007669"/>
    <property type="project" value="UniProtKB-UniRule"/>
</dbReference>
<dbReference type="GO" id="GO:0009236">
    <property type="term" value="P:cobalamin biosynthetic process"/>
    <property type="evidence" value="ECO:0007669"/>
    <property type="project" value="UniProtKB-KW"/>
</dbReference>
<dbReference type="CDD" id="cd02439">
    <property type="entry name" value="DMB-PRT_CobT"/>
    <property type="match status" value="1"/>
</dbReference>
<dbReference type="FunFam" id="3.40.50.10210:FF:000001">
    <property type="entry name" value="Nicotinate-nucleotide--dimethylbenzimidazole phosphoribosyltransferase"/>
    <property type="match status" value="1"/>
</dbReference>
<dbReference type="Gene3D" id="1.10.1610.10">
    <property type="match status" value="1"/>
</dbReference>
<dbReference type="Gene3D" id="3.40.50.10210">
    <property type="match status" value="1"/>
</dbReference>
<dbReference type="HAMAP" id="MF_00230">
    <property type="entry name" value="CobT"/>
    <property type="match status" value="1"/>
</dbReference>
<dbReference type="InterPro" id="IPR003200">
    <property type="entry name" value="Nict_dMeBzImd_PRibTrfase"/>
</dbReference>
<dbReference type="InterPro" id="IPR017846">
    <property type="entry name" value="Nict_dMeBzImd_PRibTrfase_bact"/>
</dbReference>
<dbReference type="InterPro" id="IPR023195">
    <property type="entry name" value="Nict_dMeBzImd_PRibTrfase_N"/>
</dbReference>
<dbReference type="InterPro" id="IPR036087">
    <property type="entry name" value="Nict_dMeBzImd_PRibTrfase_sf"/>
</dbReference>
<dbReference type="NCBIfam" id="TIGR03160">
    <property type="entry name" value="cobT_DBIPRT"/>
    <property type="match status" value="1"/>
</dbReference>
<dbReference type="NCBIfam" id="NF000996">
    <property type="entry name" value="PRK00105.1"/>
    <property type="match status" value="1"/>
</dbReference>
<dbReference type="PANTHER" id="PTHR43463">
    <property type="entry name" value="NICOTINATE-NUCLEOTIDE--DIMETHYLBENZIMIDAZOLE PHOSPHORIBOSYLTRANSFERASE"/>
    <property type="match status" value="1"/>
</dbReference>
<dbReference type="PANTHER" id="PTHR43463:SF1">
    <property type="entry name" value="NICOTINATE-NUCLEOTIDE--DIMETHYLBENZIMIDAZOLE PHOSPHORIBOSYLTRANSFERASE"/>
    <property type="match status" value="1"/>
</dbReference>
<dbReference type="Pfam" id="PF02277">
    <property type="entry name" value="DBI_PRT"/>
    <property type="match status" value="1"/>
</dbReference>
<dbReference type="SUPFAM" id="SSF52733">
    <property type="entry name" value="Nicotinate mononucleotide:5,6-dimethylbenzimidazole phosphoribosyltransferase (CobT)"/>
    <property type="match status" value="1"/>
</dbReference>
<protein>
    <recommendedName>
        <fullName evidence="1">Nicotinate-nucleotide--dimethylbenzimidazole phosphoribosyltransferase</fullName>
        <shortName evidence="1">NN:DBI PRT</shortName>
        <ecNumber evidence="1">2.4.2.21</ecNumber>
    </recommendedName>
    <alternativeName>
        <fullName evidence="1">N(1)-alpha-phosphoribosyltransferase</fullName>
    </alternativeName>
</protein>
<gene>
    <name evidence="1" type="primary">cobT</name>
    <name type="ordered locus">Gura_4187</name>
</gene>
<reference key="1">
    <citation type="submission" date="2007-05" db="EMBL/GenBank/DDBJ databases">
        <title>Complete sequence of Geobacter uraniireducens Rf4.</title>
        <authorList>
            <consortium name="US DOE Joint Genome Institute"/>
            <person name="Copeland A."/>
            <person name="Lucas S."/>
            <person name="Lapidus A."/>
            <person name="Barry K."/>
            <person name="Detter J.C."/>
            <person name="Glavina del Rio T."/>
            <person name="Hammon N."/>
            <person name="Israni S."/>
            <person name="Dalin E."/>
            <person name="Tice H."/>
            <person name="Pitluck S."/>
            <person name="Chertkov O."/>
            <person name="Brettin T."/>
            <person name="Bruce D."/>
            <person name="Han C."/>
            <person name="Schmutz J."/>
            <person name="Larimer F."/>
            <person name="Land M."/>
            <person name="Hauser L."/>
            <person name="Kyrpides N."/>
            <person name="Mikhailova N."/>
            <person name="Shelobolina E."/>
            <person name="Aklujkar M."/>
            <person name="Lovley D."/>
            <person name="Richardson P."/>
        </authorList>
    </citation>
    <scope>NUCLEOTIDE SEQUENCE [LARGE SCALE GENOMIC DNA]</scope>
    <source>
        <strain>ATCC BAA-1134 / JCM 13001 / Rf4</strain>
    </source>
</reference>
<keyword id="KW-0169">Cobalamin biosynthesis</keyword>
<keyword id="KW-0328">Glycosyltransferase</keyword>
<keyword id="KW-1185">Reference proteome</keyword>
<keyword id="KW-0808">Transferase</keyword>
<sequence>MNLLQEALAKIQPVDAVMLAKAQAKLDKKTKPLGSLGRLEEFARRFVAITGDLQPDTAKKIVFTFAGDHGVVEEGVSAFPKEVTPQMVFNFLRGGAGVNVLARHTGAEVRVVDVGVDFDFEPTPGLIIDKVAKGTRNFAKGPAMSREEAIAAIEVGIGLANRAKAEGVAMLGTGEMGIGNTTPSSAIIAAISGKTVKEVTHRGTGINDAALSHKIRVIEQGLAVNKPDPRDPLDVLAKVGGLEIAAIAGLVLGAAANRQPVVIDGFISTAGALIASELNPHVKEYIFAAHESVEIGHRFMLDRIGAEPILDLKLRLGEGTGAALAMGLIEAGVKILKEMATFEEAGVAEGEY</sequence>
<accession>A5G962</accession>
<organism>
    <name type="scientific">Geotalea uraniireducens (strain Rf4)</name>
    <name type="common">Geobacter uraniireducens</name>
    <dbReference type="NCBI Taxonomy" id="351605"/>
    <lineage>
        <taxon>Bacteria</taxon>
        <taxon>Pseudomonadati</taxon>
        <taxon>Thermodesulfobacteriota</taxon>
        <taxon>Desulfuromonadia</taxon>
        <taxon>Geobacterales</taxon>
        <taxon>Geobacteraceae</taxon>
        <taxon>Geotalea</taxon>
    </lineage>
</organism>
<proteinExistence type="inferred from homology"/>
<feature type="chain" id="PRO_1000078243" description="Nicotinate-nucleotide--dimethylbenzimidazole phosphoribosyltransferase">
    <location>
        <begin position="1"/>
        <end position="352"/>
    </location>
</feature>
<feature type="active site" description="Proton acceptor" evidence="1">
    <location>
        <position position="318"/>
    </location>
</feature>
<comment type="function">
    <text evidence="1">Catalyzes the synthesis of alpha-ribazole-5'-phosphate from nicotinate mononucleotide (NAMN) and 5,6-dimethylbenzimidazole (DMB).</text>
</comment>
<comment type="catalytic activity">
    <reaction evidence="1">
        <text>5,6-dimethylbenzimidazole + nicotinate beta-D-ribonucleotide = alpha-ribazole 5'-phosphate + nicotinate + H(+)</text>
        <dbReference type="Rhea" id="RHEA:11196"/>
        <dbReference type="ChEBI" id="CHEBI:15378"/>
        <dbReference type="ChEBI" id="CHEBI:15890"/>
        <dbReference type="ChEBI" id="CHEBI:32544"/>
        <dbReference type="ChEBI" id="CHEBI:57502"/>
        <dbReference type="ChEBI" id="CHEBI:57918"/>
        <dbReference type="EC" id="2.4.2.21"/>
    </reaction>
</comment>
<comment type="pathway">
    <text evidence="1">Nucleoside biosynthesis; alpha-ribazole biosynthesis; alpha-ribazole from 5,6-dimethylbenzimidazole: step 1/2.</text>
</comment>
<comment type="similarity">
    <text evidence="1">Belongs to the CobT family.</text>
</comment>